<evidence type="ECO:0000250" key="1"/>
<evidence type="ECO:0000255" key="2">
    <source>
        <dbReference type="PROSITE-ProRule" id="PRU01234"/>
    </source>
</evidence>
<evidence type="ECO:0000256" key="3">
    <source>
        <dbReference type="SAM" id="MobiDB-lite"/>
    </source>
</evidence>
<evidence type="ECO:0000305" key="4"/>
<comment type="function">
    <text evidence="1">May be involved in a process influencing telomere capping.</text>
</comment>
<comment type="subcellular location">
    <subcellularLocation>
        <location evidence="1">Cytoplasm</location>
    </subcellularLocation>
</comment>
<comment type="similarity">
    <text evidence="4">Belongs to the RTC5 family.</text>
</comment>
<feature type="chain" id="PRO_0000408845" description="Restriction of telomere capping protein 5">
    <location>
        <begin position="1"/>
        <end position="581"/>
    </location>
</feature>
<feature type="domain" description="TLDc" evidence="2">
    <location>
        <begin position="317"/>
        <end position="540"/>
    </location>
</feature>
<feature type="region of interest" description="Disordered" evidence="3">
    <location>
        <begin position="539"/>
        <end position="581"/>
    </location>
</feature>
<feature type="compositionally biased region" description="Basic and acidic residues" evidence="3">
    <location>
        <begin position="557"/>
        <end position="566"/>
    </location>
</feature>
<sequence length="581" mass="64284">MGQVLSEEKPAPLSHEEIVKELANIFAEKCFTSLELYSLKQVFKSLADHEQRVGYLKEGTVAKYLKVPGILDVSAVLFQMASYIAAFPFLEDAPAVLGLEQMVIVITLVTDRYRRVLGKRAADKTKLLFKSLAVYDRKFAKPAVDTPSHSKNAREQIGSDGQGLDNDELVLAAFDALGHVGSKKQQNMPAAHGAMIPGDNFRKLIMLLLLVAPLDGQDSLDSDPDRVTGAGLQSLRTAAESILAAFLDVEQNPGIEYHRFNKVIAGCLPFLFQGLAPLFEHFLFSKELDFHKGKGDTFRSPVMPPEPRQPLLQDTGSIMNASILSQMSFFIPGSFLFRRIRLLYAGDLDGFSMGSFETKVFNWRAPTILLVSGTRLLDESDHHSNGSVPAFWASLPPRRFPPGSSGEGERLAFGVYIFEPWKLTHRECFGGEETILFQLEPIHDLFRASPLNKDYVSFTRPSASTSHAGVSFGCPPPKPSQAYRRSGMIPLGPVSLMLDGSFEYGCFTHDYASSGGAFQTSMVREYNFQERLTLKAWRSGAAAGTRKQGTKQNNGRGKQEKLKLEGESTWGRATLKPTEHY</sequence>
<organism>
    <name type="scientific">Sordaria macrospora (strain ATCC MYA-333 / DSM 997 / K(L3346) / K-hell)</name>
    <dbReference type="NCBI Taxonomy" id="771870"/>
    <lineage>
        <taxon>Eukaryota</taxon>
        <taxon>Fungi</taxon>
        <taxon>Dikarya</taxon>
        <taxon>Ascomycota</taxon>
        <taxon>Pezizomycotina</taxon>
        <taxon>Sordariomycetes</taxon>
        <taxon>Sordariomycetidae</taxon>
        <taxon>Sordariales</taxon>
        <taxon>Sordariaceae</taxon>
        <taxon>Sordaria</taxon>
    </lineage>
</organism>
<reference key="1">
    <citation type="journal article" date="2010" name="PLoS Genet.">
        <title>De novo assembly of a 40 Mb eukaryotic genome from short sequence reads: Sordaria macrospora, a model organism for fungal morphogenesis.</title>
        <authorList>
            <person name="Nowrousian M."/>
            <person name="Stajich J.E."/>
            <person name="Chu M."/>
            <person name="Engh I."/>
            <person name="Espagne E."/>
            <person name="Halliday K."/>
            <person name="Kamerewerd J."/>
            <person name="Kempken F."/>
            <person name="Knab B."/>
            <person name="Kuo H.-C."/>
            <person name="Osiewacz H.D."/>
            <person name="Poeggeler S."/>
            <person name="Read N.D."/>
            <person name="Seiler S."/>
            <person name="Smith K.M."/>
            <person name="Zickler D."/>
            <person name="Kueck U."/>
            <person name="Freitag M."/>
        </authorList>
    </citation>
    <scope>NUCLEOTIDE SEQUENCE [LARGE SCALE GENOMIC DNA]</scope>
    <source>
        <strain>ATCC MYA-333 / DSM 997 / K(L3346) / K-hell</strain>
    </source>
</reference>
<dbReference type="EMBL" id="CABT02000001">
    <property type="protein sequence ID" value="CCC06607.1"/>
    <property type="molecule type" value="Genomic_DNA"/>
</dbReference>
<dbReference type="RefSeq" id="XP_003345094.1">
    <property type="nucleotide sequence ID" value="XM_003345046.1"/>
</dbReference>
<dbReference type="FunCoup" id="D1ZRF1">
    <property type="interactions" value="5"/>
</dbReference>
<dbReference type="STRING" id="771870.D1ZRF1"/>
<dbReference type="GeneID" id="10802422"/>
<dbReference type="KEGG" id="smp:10802422"/>
<dbReference type="VEuPathDB" id="FungiDB:SMAC_07385"/>
<dbReference type="eggNOG" id="ENOG502QV3R">
    <property type="taxonomic scope" value="Eukaryota"/>
</dbReference>
<dbReference type="HOGENOM" id="CLU_011918_1_0_1"/>
<dbReference type="InParanoid" id="D1ZRF1"/>
<dbReference type="OMA" id="KWEFEAR"/>
<dbReference type="OrthoDB" id="289228at2759"/>
<dbReference type="Proteomes" id="UP000001881">
    <property type="component" value="Unassembled WGS sequence"/>
</dbReference>
<dbReference type="GO" id="GO:0005737">
    <property type="term" value="C:cytoplasm"/>
    <property type="evidence" value="ECO:0007669"/>
    <property type="project" value="UniProtKB-SubCell"/>
</dbReference>
<dbReference type="GO" id="GO:0005634">
    <property type="term" value="C:nucleus"/>
    <property type="evidence" value="ECO:0007669"/>
    <property type="project" value="TreeGrafter"/>
</dbReference>
<dbReference type="GO" id="GO:0006979">
    <property type="term" value="P:response to oxidative stress"/>
    <property type="evidence" value="ECO:0007669"/>
    <property type="project" value="TreeGrafter"/>
</dbReference>
<dbReference type="InterPro" id="IPR006571">
    <property type="entry name" value="TLDc_dom"/>
</dbReference>
<dbReference type="PANTHER" id="PTHR23354">
    <property type="entry name" value="NUCLEOLAR PROTEIN 7/ESTROGEN RECEPTOR COACTIVATOR-RELATED"/>
    <property type="match status" value="1"/>
</dbReference>
<dbReference type="PANTHER" id="PTHR23354:SF130">
    <property type="entry name" value="RESTRICTION OF TELOMERE CAPPING PROTEIN 5"/>
    <property type="match status" value="1"/>
</dbReference>
<dbReference type="Pfam" id="PF07534">
    <property type="entry name" value="TLD"/>
    <property type="match status" value="1"/>
</dbReference>
<dbReference type="SMART" id="SM00584">
    <property type="entry name" value="TLDc"/>
    <property type="match status" value="1"/>
</dbReference>
<dbReference type="PROSITE" id="PS51886">
    <property type="entry name" value="TLDC"/>
    <property type="match status" value="1"/>
</dbReference>
<name>RTC5_SORMK</name>
<proteinExistence type="inferred from homology"/>
<protein>
    <recommendedName>
        <fullName>Restriction of telomere capping protein 5</fullName>
    </recommendedName>
</protein>
<accession>D1ZRF1</accession>
<accession>F7VM79</accession>
<keyword id="KW-0963">Cytoplasm</keyword>
<keyword id="KW-1185">Reference proteome</keyword>
<gene>
    <name type="primary">RTC5</name>
    <name type="ORF">SMAC_07385</name>
</gene>